<sequence>MKKAEMGRFNISPDEDSSSYSSNSDFNYSYPTKQAALKSHYADVDPENQNFLLESNLGKKKYETDFHPGTTSFGMSVFNLSNAIVGSGILGLSYAMANTGIALFIILLTFVSIFSLYSVHLLLKTANEGGSLLYEQLGHKAFGMVGKLTASGSITMQNIGAMSSYLFIVKYELPLVIQALMNIEDTNGLWYLNGDYLVLLVSLVLILPLSLLRNLGYLGYTSGLSLLCMMFFLIVVIFKKFQISCPAEIAFLVNETVNSSLTQPATFLPDMGFNRTESDSCQPRYFIFNSQTVYAVPILTFSFVCHPAILPIYEELKGRSRRRMMNVSKISFFAMFLMYLLAALFGYLTFYGHVESELLHTYSSVMETDILLLIVRLAVLVAVTLTVPVVIFPIRSSITHLLCASKEFSWWRHSVITVSILVFTNLLVIFVPNIRDIFGFIGASAAAMLIFILPSAFYIKLVKKEPMKSVQKIGAMFFLLSGIVVMTGSMALIVLDWVHNAPGGGH</sequence>
<keyword id="KW-0029">Amino-acid transport</keyword>
<keyword id="KW-1003">Cell membrane</keyword>
<keyword id="KW-1015">Disulfide bond</keyword>
<keyword id="KW-0325">Glycoprotein</keyword>
<keyword id="KW-0406">Ion transport</keyword>
<keyword id="KW-0472">Membrane</keyword>
<keyword id="KW-0597">Phosphoprotein</keyword>
<keyword id="KW-1185">Reference proteome</keyword>
<keyword id="KW-0915">Sodium</keyword>
<keyword id="KW-0739">Sodium transport</keyword>
<keyword id="KW-0769">Symport</keyword>
<keyword id="KW-0812">Transmembrane</keyword>
<keyword id="KW-1133">Transmembrane helix</keyword>
<keyword id="KW-0813">Transport</keyword>
<keyword id="KW-0832">Ubl conjugation</keyword>
<feature type="chain" id="PRO_0000311368" description="Sodium-coupled neutral amino acid symporter 2">
    <location>
        <begin position="1"/>
        <end position="506"/>
    </location>
</feature>
<feature type="topological domain" description="Cytoplasmic" evidence="4 5">
    <location>
        <begin position="1"/>
        <end position="76"/>
    </location>
</feature>
<feature type="transmembrane region" description="Helical" evidence="5">
    <location>
        <begin position="77"/>
        <end position="96"/>
    </location>
</feature>
<feature type="topological domain" description="Extracellular" evidence="4 5">
    <location>
        <begin position="97"/>
        <end position="102"/>
    </location>
</feature>
<feature type="transmembrane region" description="Helical" evidence="4 5">
    <location>
        <begin position="103"/>
        <end position="123"/>
    </location>
</feature>
<feature type="topological domain" description="Cytoplasmic" evidence="4 5">
    <location>
        <begin position="124"/>
        <end position="158"/>
    </location>
</feature>
<feature type="transmembrane region" description="Helical" evidence="4 5">
    <location>
        <begin position="159"/>
        <end position="177"/>
    </location>
</feature>
<feature type="topological domain" description="Extracellular" evidence="5">
    <location>
        <begin position="178"/>
        <end position="188"/>
    </location>
</feature>
<feature type="transmembrane region" description="Helical" evidence="4 5">
    <location>
        <begin position="189"/>
        <end position="209"/>
    </location>
</feature>
<feature type="topological domain" description="Cytoplasmic" evidence="4 5">
    <location>
        <begin position="210"/>
        <end position="217"/>
    </location>
</feature>
<feature type="transmembrane region" description="Helical" evidence="4 5">
    <location>
        <begin position="218"/>
        <end position="238"/>
    </location>
</feature>
<feature type="topological domain" description="Extracellular" evidence="4 5">
    <location>
        <begin position="239"/>
        <end position="292"/>
    </location>
</feature>
<feature type="transmembrane region" description="Helical" evidence="4 5">
    <location>
        <begin position="293"/>
        <end position="313"/>
    </location>
</feature>
<feature type="topological domain" description="Cytoplasmic" evidence="4 5">
    <location>
        <begin position="314"/>
        <end position="329"/>
    </location>
</feature>
<feature type="transmembrane region" description="Helical" evidence="5">
    <location>
        <begin position="330"/>
        <end position="350"/>
    </location>
</feature>
<feature type="topological domain" description="Extracellular" evidence="4 5">
    <location>
        <begin position="351"/>
        <end position="371"/>
    </location>
</feature>
<feature type="transmembrane region" description="Helical" evidence="5">
    <location>
        <begin position="372"/>
        <end position="392"/>
    </location>
</feature>
<feature type="topological domain" description="Cytoplasmic" evidence="4 5">
    <location>
        <begin position="393"/>
        <end position="413"/>
    </location>
</feature>
<feature type="transmembrane region" description="Helical" evidence="5">
    <location>
        <begin position="414"/>
        <end position="434"/>
    </location>
</feature>
<feature type="topological domain" description="Extracellular" evidence="4 5">
    <location>
        <begin position="435"/>
        <end position="436"/>
    </location>
</feature>
<feature type="transmembrane region" description="Helical" evidence="4 5">
    <location>
        <begin position="437"/>
        <end position="457"/>
    </location>
</feature>
<feature type="topological domain" description="Cytoplasmic" evidence="5">
    <location>
        <begin position="458"/>
        <end position="472"/>
    </location>
</feature>
<feature type="transmembrane region" description="Helical" evidence="4 5">
    <location>
        <begin position="473"/>
        <end position="495"/>
    </location>
</feature>
<feature type="topological domain" description="Extracellular" evidence="4 5">
    <location>
        <begin position="496"/>
        <end position="506"/>
    </location>
</feature>
<feature type="region of interest" description="Regulates protein turnover upon amino acid deprivation" evidence="1">
    <location>
        <begin position="1"/>
        <end position="96"/>
    </location>
</feature>
<feature type="region of interest" description="Disordered" evidence="7">
    <location>
        <begin position="1"/>
        <end position="23"/>
    </location>
</feature>
<feature type="binding site" evidence="4">
    <location>
        <position position="82"/>
    </location>
    <ligand>
        <name>Na(+)</name>
        <dbReference type="ChEBI" id="CHEBI:29101"/>
    </ligand>
</feature>
<feature type="binding site" evidence="4">
    <location>
        <position position="386"/>
    </location>
    <ligand>
        <name>Na(+)</name>
        <dbReference type="ChEBI" id="CHEBI:29101"/>
    </ligand>
</feature>
<feature type="modified residue" description="Phosphoserine" evidence="3">
    <location>
        <position position="12"/>
    </location>
</feature>
<feature type="modified residue" description="Phosphoserine" evidence="2">
    <location>
        <position position="21"/>
    </location>
</feature>
<feature type="modified residue" description="Phosphoserine" evidence="3">
    <location>
        <position position="22"/>
    </location>
</feature>
<feature type="modified residue" description="Phosphoserine" evidence="3">
    <location>
        <position position="55"/>
    </location>
</feature>
<feature type="glycosylation site" description="N-linked (GlcNAc...) asparagine" evidence="5">
    <location>
        <position position="258"/>
    </location>
</feature>
<feature type="glycosylation site" description="N-linked (GlcNAc...) asparagine" evidence="5">
    <location>
        <position position="274"/>
    </location>
</feature>
<feature type="disulfide bond" evidence="6">
    <location>
        <begin position="245"/>
        <end position="281"/>
    </location>
</feature>
<feature type="sequence conflict" description="In Ref. 2; CAC51429." evidence="8" ref="2">
    <original>S</original>
    <variation>N</variation>
    <location>
        <position position="409"/>
    </location>
</feature>
<evidence type="ECO:0000250" key="1"/>
<evidence type="ECO:0000250" key="2">
    <source>
        <dbReference type="UniProtKB" id="Q8CFE6"/>
    </source>
</evidence>
<evidence type="ECO:0000250" key="3">
    <source>
        <dbReference type="UniProtKB" id="Q96QD8"/>
    </source>
</evidence>
<evidence type="ECO:0000250" key="4">
    <source>
        <dbReference type="UniProtKB" id="Q9JHE5"/>
    </source>
</evidence>
<evidence type="ECO:0000255" key="5"/>
<evidence type="ECO:0000255" key="6">
    <source>
        <dbReference type="PROSITE-ProRule" id="PRU00114"/>
    </source>
</evidence>
<evidence type="ECO:0000256" key="7">
    <source>
        <dbReference type="SAM" id="MobiDB-lite"/>
    </source>
</evidence>
<evidence type="ECO:0000305" key="8"/>
<dbReference type="EMBL" id="BC133547">
    <property type="protein sequence ID" value="AAI33548.1"/>
    <property type="molecule type" value="mRNA"/>
</dbReference>
<dbReference type="EMBL" id="AJ344100">
    <property type="protein sequence ID" value="CAC51429.1"/>
    <property type="molecule type" value="mRNA"/>
</dbReference>
<dbReference type="RefSeq" id="NP_001075893.1">
    <property type="nucleotide sequence ID" value="NM_001082424.1"/>
</dbReference>
<dbReference type="SMR" id="A2VE31"/>
<dbReference type="FunCoup" id="A2VE31">
    <property type="interactions" value="965"/>
</dbReference>
<dbReference type="STRING" id="9913.ENSBTAP00000014749"/>
<dbReference type="GlyCosmos" id="A2VE31">
    <property type="glycosylation" value="2 sites, No reported glycans"/>
</dbReference>
<dbReference type="GlyGen" id="A2VE31">
    <property type="glycosylation" value="2 sites"/>
</dbReference>
<dbReference type="PaxDb" id="9913-ENSBTAP00000014749"/>
<dbReference type="Ensembl" id="ENSBTAT00000014749.6">
    <property type="protein sequence ID" value="ENSBTAP00000014749.5"/>
    <property type="gene ID" value="ENSBTAG00000011105.7"/>
</dbReference>
<dbReference type="GeneID" id="338044"/>
<dbReference type="KEGG" id="bta:338044"/>
<dbReference type="CTD" id="54407"/>
<dbReference type="VEuPathDB" id="HostDB:ENSBTAG00000011105"/>
<dbReference type="VGNC" id="VGNC:34849">
    <property type="gene designation" value="SLC38A2"/>
</dbReference>
<dbReference type="eggNOG" id="KOG1305">
    <property type="taxonomic scope" value="Eukaryota"/>
</dbReference>
<dbReference type="GeneTree" id="ENSGT00940000155486"/>
<dbReference type="HOGENOM" id="CLU_009020_0_1_1"/>
<dbReference type="InParanoid" id="A2VE31"/>
<dbReference type="OMA" id="DSIHHQR"/>
<dbReference type="OrthoDB" id="655540at2759"/>
<dbReference type="TreeFam" id="TF328787"/>
<dbReference type="Reactome" id="R-BTA-210500">
    <property type="pathway name" value="Glutamate Neurotransmitter Release Cycle"/>
</dbReference>
<dbReference type="Reactome" id="R-BTA-352230">
    <property type="pathway name" value="Amino acid transport across the plasma membrane"/>
</dbReference>
<dbReference type="Proteomes" id="UP000009136">
    <property type="component" value="Chromosome 5"/>
</dbReference>
<dbReference type="Bgee" id="ENSBTAG00000011105">
    <property type="expression patterns" value="Expressed in spermatocyte and 106 other cell types or tissues"/>
</dbReference>
<dbReference type="GO" id="GO:0005737">
    <property type="term" value="C:cytoplasm"/>
    <property type="evidence" value="ECO:0007669"/>
    <property type="project" value="Ensembl"/>
</dbReference>
<dbReference type="GO" id="GO:0005886">
    <property type="term" value="C:plasma membrane"/>
    <property type="evidence" value="ECO:0000250"/>
    <property type="project" value="UniProtKB"/>
</dbReference>
<dbReference type="GO" id="GO:0015172">
    <property type="term" value="F:acidic amino acid transmembrane transporter activity"/>
    <property type="evidence" value="ECO:0000250"/>
    <property type="project" value="UniProtKB"/>
</dbReference>
<dbReference type="GO" id="GO:0015655">
    <property type="term" value="F:alanine:sodium symporter activity"/>
    <property type="evidence" value="ECO:0000250"/>
    <property type="project" value="UniProtKB"/>
</dbReference>
<dbReference type="GO" id="GO:0015171">
    <property type="term" value="F:amino acid transmembrane transporter activity"/>
    <property type="evidence" value="ECO:0000250"/>
    <property type="project" value="UniProtKB"/>
</dbReference>
<dbReference type="GO" id="GO:0005283">
    <property type="term" value="F:amino acid:sodium symporter activity"/>
    <property type="evidence" value="ECO:0000250"/>
    <property type="project" value="UniProtKB"/>
</dbReference>
<dbReference type="GO" id="GO:0015186">
    <property type="term" value="F:L-glutamine transmembrane transporter activity"/>
    <property type="evidence" value="ECO:0000250"/>
    <property type="project" value="UniProtKB"/>
</dbReference>
<dbReference type="GO" id="GO:0015175">
    <property type="term" value="F:neutral L-amino acid transmembrane transporter activity"/>
    <property type="evidence" value="ECO:0000250"/>
    <property type="project" value="UniProtKB"/>
</dbReference>
<dbReference type="GO" id="GO:0005295">
    <property type="term" value="F:neutral L-amino acid:sodium symporter activity"/>
    <property type="evidence" value="ECO:0000250"/>
    <property type="project" value="UniProtKB"/>
</dbReference>
<dbReference type="GO" id="GO:0005298">
    <property type="term" value="F:proline:sodium symporter activity"/>
    <property type="evidence" value="ECO:0000250"/>
    <property type="project" value="UniProtKB"/>
</dbReference>
<dbReference type="GO" id="GO:0032328">
    <property type="term" value="P:alanine transport"/>
    <property type="evidence" value="ECO:0000250"/>
    <property type="project" value="UniProtKB"/>
</dbReference>
<dbReference type="GO" id="GO:0043090">
    <property type="term" value="P:amino acid import"/>
    <property type="evidence" value="ECO:0000250"/>
    <property type="project" value="UniProtKB"/>
</dbReference>
<dbReference type="GO" id="GO:0003333">
    <property type="term" value="P:amino acid transmembrane transport"/>
    <property type="evidence" value="ECO:0000318"/>
    <property type="project" value="GO_Central"/>
</dbReference>
<dbReference type="GO" id="GO:0006865">
    <property type="term" value="P:amino acid transport"/>
    <property type="evidence" value="ECO:0000250"/>
    <property type="project" value="UniProtKB"/>
</dbReference>
<dbReference type="GO" id="GO:1903841">
    <property type="term" value="P:cellular response to arsenite(3-)"/>
    <property type="evidence" value="ECO:0007669"/>
    <property type="project" value="Ensembl"/>
</dbReference>
<dbReference type="GO" id="GO:0006868">
    <property type="term" value="P:glutamine transport"/>
    <property type="evidence" value="ECO:0000318"/>
    <property type="project" value="GO_Central"/>
</dbReference>
<dbReference type="GO" id="GO:1903803">
    <property type="term" value="P:L-glutamine import across plasma membrane"/>
    <property type="evidence" value="ECO:0000250"/>
    <property type="project" value="UniProtKB"/>
</dbReference>
<dbReference type="GO" id="GO:1904271">
    <property type="term" value="P:L-proline import across plasma membrane"/>
    <property type="evidence" value="ECO:0000250"/>
    <property type="project" value="UniProtKB"/>
</dbReference>
<dbReference type="GO" id="GO:1903812">
    <property type="term" value="P:L-serine import across plasma membrane"/>
    <property type="evidence" value="ECO:0000250"/>
    <property type="project" value="UniProtKB"/>
</dbReference>
<dbReference type="GO" id="GO:0015804">
    <property type="term" value="P:neutral amino acid transport"/>
    <property type="evidence" value="ECO:0000250"/>
    <property type="project" value="UniProtKB"/>
</dbReference>
<dbReference type="GO" id="GO:0033120">
    <property type="term" value="P:positive regulation of RNA splicing"/>
    <property type="evidence" value="ECO:0007669"/>
    <property type="project" value="Ensembl"/>
</dbReference>
<dbReference type="GO" id="GO:0015824">
    <property type="term" value="P:proline transport"/>
    <property type="evidence" value="ECO:0000250"/>
    <property type="project" value="UniProtKB"/>
</dbReference>
<dbReference type="GO" id="GO:0080135">
    <property type="term" value="P:regulation of cellular response to stress"/>
    <property type="evidence" value="ECO:0007669"/>
    <property type="project" value="Ensembl"/>
</dbReference>
<dbReference type="GO" id="GO:1903294">
    <property type="term" value="P:regulation of glutamate secretion, neurotransmission"/>
    <property type="evidence" value="ECO:0000250"/>
    <property type="project" value="UniProtKB"/>
</dbReference>
<dbReference type="InterPro" id="IPR013057">
    <property type="entry name" value="AA_transpt_TM"/>
</dbReference>
<dbReference type="PANTHER" id="PTHR22950">
    <property type="entry name" value="AMINO ACID TRANSPORTER"/>
    <property type="match status" value="1"/>
</dbReference>
<dbReference type="PANTHER" id="PTHR22950:SF207">
    <property type="entry name" value="SODIUM-COUPLED NEUTRAL AMINO ACID SYMPORTER 2"/>
    <property type="match status" value="1"/>
</dbReference>
<dbReference type="Pfam" id="PF01490">
    <property type="entry name" value="Aa_trans"/>
    <property type="match status" value="1"/>
</dbReference>
<proteinExistence type="evidence at transcript level"/>
<comment type="function">
    <text evidence="2 4">Symporter that cotransports neutral amino acids and sodium ions from the extracellular to the intracellular side of the cell membrane. The transport is pH-sensitive, Li(+)-intolerant, electrogenic, driven by the Na(+) electrochemical gradient and cotransports of neutral amino acids and sodium ions with a stoichiometry of 1:1. May function in the transport of amino acids at the blood-brain barrier (By similarity). May function in the transport of amino acids in the supply of maternal nutrients to the fetus through the placenta (By similarity). Maintains a key metabolic glutamine/glutamate balance underpinning retrograde signaling by dendritic release of the neurotransmitter glutamate (By similarity). Transports L-proline in differentiating osteoblasts for the efficient synthesis of proline-enriched proteins and provides proline essential for osteoblast differentiation and bone formation during bone development (By similarity).</text>
</comment>
<comment type="catalytic activity">
    <reaction evidence="4">
        <text>L-alanine(in) + Na(+)(in) = L-alanine(out) + Na(+)(out)</text>
        <dbReference type="Rhea" id="RHEA:29283"/>
        <dbReference type="ChEBI" id="CHEBI:29101"/>
        <dbReference type="ChEBI" id="CHEBI:57972"/>
    </reaction>
    <physiologicalReaction direction="right-to-left" evidence="4">
        <dbReference type="Rhea" id="RHEA:29285"/>
    </physiologicalReaction>
</comment>
<comment type="catalytic activity">
    <reaction evidence="4">
        <text>glycine(in) + Na(+)(in) = glycine(out) + Na(+)(out)</text>
        <dbReference type="Rhea" id="RHEA:68228"/>
        <dbReference type="ChEBI" id="CHEBI:29101"/>
        <dbReference type="ChEBI" id="CHEBI:57305"/>
    </reaction>
    <physiologicalReaction direction="right-to-left" evidence="4">
        <dbReference type="Rhea" id="RHEA:68230"/>
    </physiologicalReaction>
</comment>
<comment type="catalytic activity">
    <reaction evidence="4">
        <text>L-serine(in) + Na(+)(in) = L-serine(out) + Na(+)(out)</text>
        <dbReference type="Rhea" id="RHEA:29575"/>
        <dbReference type="ChEBI" id="CHEBI:29101"/>
        <dbReference type="ChEBI" id="CHEBI:33384"/>
    </reaction>
    <physiologicalReaction direction="right-to-left" evidence="4">
        <dbReference type="Rhea" id="RHEA:29577"/>
    </physiologicalReaction>
</comment>
<comment type="catalytic activity">
    <reaction evidence="4">
        <text>L-proline(in) + Na(+)(in) = L-proline(out) + Na(+)(out)</text>
        <dbReference type="Rhea" id="RHEA:28967"/>
        <dbReference type="ChEBI" id="CHEBI:29101"/>
        <dbReference type="ChEBI" id="CHEBI:60039"/>
    </reaction>
    <physiologicalReaction direction="right-to-left" evidence="4">
        <dbReference type="Rhea" id="RHEA:28969"/>
    </physiologicalReaction>
</comment>
<comment type="catalytic activity">
    <reaction evidence="4">
        <text>L-methionine(in) + Na(+)(in) = L-methionine(out) + Na(+)(out)</text>
        <dbReference type="Rhea" id="RHEA:68240"/>
        <dbReference type="ChEBI" id="CHEBI:29101"/>
        <dbReference type="ChEBI" id="CHEBI:57844"/>
    </reaction>
    <physiologicalReaction direction="right-to-left" evidence="4">
        <dbReference type="Rhea" id="RHEA:68242"/>
    </physiologicalReaction>
</comment>
<comment type="catalytic activity">
    <reaction evidence="4">
        <text>L-histidine(in) + Na(+)(in) = L-histidine(out) + Na(+)(out)</text>
        <dbReference type="Rhea" id="RHEA:71583"/>
        <dbReference type="ChEBI" id="CHEBI:29101"/>
        <dbReference type="ChEBI" id="CHEBI:57595"/>
    </reaction>
    <physiologicalReaction direction="right-to-left" evidence="4">
        <dbReference type="Rhea" id="RHEA:71585"/>
    </physiologicalReaction>
</comment>
<comment type="catalytic activity">
    <reaction evidence="4">
        <text>L-asparagine(in) + Na(+)(in) = L-asparagine(out) + Na(+)(out)</text>
        <dbReference type="Rhea" id="RHEA:71383"/>
        <dbReference type="ChEBI" id="CHEBI:29101"/>
        <dbReference type="ChEBI" id="CHEBI:58048"/>
    </reaction>
    <physiologicalReaction direction="right-to-left" evidence="4">
        <dbReference type="Rhea" id="RHEA:71385"/>
    </physiologicalReaction>
</comment>
<comment type="catalytic activity">
    <reaction evidence="4">
        <text>L-glutamine(in) + Na(+)(in) = L-glutamine(out) + Na(+)(out)</text>
        <dbReference type="Rhea" id="RHEA:68236"/>
        <dbReference type="ChEBI" id="CHEBI:29101"/>
        <dbReference type="ChEBI" id="CHEBI:58359"/>
    </reaction>
    <physiologicalReaction direction="right-to-left" evidence="4">
        <dbReference type="Rhea" id="RHEA:68238"/>
    </physiologicalReaction>
</comment>
<comment type="catalytic activity">
    <reaction evidence="4">
        <text>L-threonine(in) + Na(+)(in) = L-threonine(out) + Na(+)(out)</text>
        <dbReference type="Rhea" id="RHEA:69999"/>
        <dbReference type="ChEBI" id="CHEBI:29101"/>
        <dbReference type="ChEBI" id="CHEBI:57926"/>
    </reaction>
    <physiologicalReaction direction="right-to-left" evidence="4">
        <dbReference type="Rhea" id="RHEA:70001"/>
    </physiologicalReaction>
</comment>
<comment type="catalytic activity">
    <reaction evidence="4">
        <text>L-leucine(in) + Na(+)(in) = L-leucine(out) + Na(+)(out)</text>
        <dbReference type="Rhea" id="RHEA:29263"/>
        <dbReference type="ChEBI" id="CHEBI:29101"/>
        <dbReference type="ChEBI" id="CHEBI:57427"/>
    </reaction>
    <physiologicalReaction direction="right-to-left" evidence="4">
        <dbReference type="Rhea" id="RHEA:29265"/>
    </physiologicalReaction>
</comment>
<comment type="catalytic activity">
    <reaction evidence="4">
        <text>L-phenylalanine(in) + Na(+)(in) = L-phenylalanine(out) + Na(+)(out)</text>
        <dbReference type="Rhea" id="RHEA:68244"/>
        <dbReference type="ChEBI" id="CHEBI:29101"/>
        <dbReference type="ChEBI" id="CHEBI:58095"/>
    </reaction>
    <physiologicalReaction direction="right-to-left" evidence="4">
        <dbReference type="Rhea" id="RHEA:68246"/>
    </physiologicalReaction>
</comment>
<comment type="activity regulation">
    <text evidence="4">Inhibited by N-methyl-D-glucamine. Inhibited by choline. Allosteric regulation of sodium ions binding by pH.</text>
</comment>
<comment type="subcellular location">
    <subcellularLocation>
        <location evidence="4">Cell membrane</location>
        <topology evidence="4">Multi-pass membrane protein</topology>
    </subcellularLocation>
    <text evidence="4">Insulin promotes recruitment to the plasma membrane from a pool localized in the trans-Golgi network or endosomes. Enriched in the somatodendritic compartment of neurons, it is also detected at the axonal shaft but excluded from the nerve terminal.</text>
</comment>
<comment type="domain">
    <text evidence="4">The extracellular C-terminal domain controls the voltage dependence for amino acid transports activity.</text>
</comment>
<comment type="PTM">
    <text evidence="2">Polyubiquitination by NEDD4L regulates the degradation and the activity of SLC38A2.</text>
</comment>
<comment type="similarity">
    <text evidence="8">Belongs to the amino acid/polyamine transporter 2 family.</text>
</comment>
<protein>
    <recommendedName>
        <fullName evidence="3">Sodium-coupled neutral amino acid symporter 2</fullName>
    </recommendedName>
    <alternativeName>
        <fullName>Amino acid transporter A2</fullName>
    </alternativeName>
    <alternativeName>
        <fullName>Protein 40-9-1</fullName>
    </alternativeName>
    <alternativeName>
        <fullName>Solute carrier family 38 member 2</fullName>
    </alternativeName>
    <alternativeName>
        <fullName>System A amino acid transporter 2</fullName>
    </alternativeName>
    <alternativeName>
        <fullName>System A transporter 1</fullName>
    </alternativeName>
    <alternativeName>
        <fullName>System N amino acid transporter 2</fullName>
    </alternativeName>
</protein>
<accession>A2VE31</accession>
<accession>Q95M41</accession>
<name>S38A2_BOVIN</name>
<organism>
    <name type="scientific">Bos taurus</name>
    <name type="common">Bovine</name>
    <dbReference type="NCBI Taxonomy" id="9913"/>
    <lineage>
        <taxon>Eukaryota</taxon>
        <taxon>Metazoa</taxon>
        <taxon>Chordata</taxon>
        <taxon>Craniata</taxon>
        <taxon>Vertebrata</taxon>
        <taxon>Euteleostomi</taxon>
        <taxon>Mammalia</taxon>
        <taxon>Eutheria</taxon>
        <taxon>Laurasiatheria</taxon>
        <taxon>Artiodactyla</taxon>
        <taxon>Ruminantia</taxon>
        <taxon>Pecora</taxon>
        <taxon>Bovidae</taxon>
        <taxon>Bovinae</taxon>
        <taxon>Bos</taxon>
    </lineage>
</organism>
<gene>
    <name evidence="3" type="primary">SLC38A2</name>
    <name type="synonym">SNAT2</name>
</gene>
<reference key="1">
    <citation type="submission" date="2007-02" db="EMBL/GenBank/DDBJ databases">
        <authorList>
            <consortium name="NIH - Mammalian Gene Collection (MGC) project"/>
        </authorList>
    </citation>
    <scope>NUCLEOTIDE SEQUENCE [LARGE SCALE MRNA]</scope>
    <source>
        <strain>Hereford</strain>
        <tissue>Fetal skin</tissue>
    </source>
</reference>
<reference key="2">
    <citation type="thesis" date="2001" institute="University of Goettingen" country="Germany">
        <authorList>
            <person name="Schmidt T."/>
        </authorList>
    </citation>
    <scope>NUCLEOTIDE SEQUENCE [MRNA] OF 223-506</scope>
</reference>